<proteinExistence type="inferred from homology"/>
<reference key="1">
    <citation type="submission" date="2008-10" db="EMBL/GenBank/DDBJ databases">
        <title>Genome sequence of Bacillus cereus AH187.</title>
        <authorList>
            <person name="Dodson R.J."/>
            <person name="Durkin A.S."/>
            <person name="Rosovitz M.J."/>
            <person name="Rasko D.A."/>
            <person name="Kolsto A.B."/>
            <person name="Okstad O.A."/>
            <person name="Ravel J."/>
            <person name="Sutton G."/>
        </authorList>
    </citation>
    <scope>NUCLEOTIDE SEQUENCE [LARGE SCALE GENOMIC DNA]</scope>
    <source>
        <strain>AH187</strain>
    </source>
</reference>
<comment type="function">
    <text evidence="1">Catalyzes the reduction of the glycolytic intermediate dihydroxyacetone phosphate (DHAP) to sn-glycerol 3-phosphate (G3P), the key precursor for phospholipid synthesis.</text>
</comment>
<comment type="catalytic activity">
    <reaction evidence="1">
        <text>sn-glycerol 3-phosphate + NAD(+) = dihydroxyacetone phosphate + NADH + H(+)</text>
        <dbReference type="Rhea" id="RHEA:11092"/>
        <dbReference type="ChEBI" id="CHEBI:15378"/>
        <dbReference type="ChEBI" id="CHEBI:57540"/>
        <dbReference type="ChEBI" id="CHEBI:57597"/>
        <dbReference type="ChEBI" id="CHEBI:57642"/>
        <dbReference type="ChEBI" id="CHEBI:57945"/>
        <dbReference type="EC" id="1.1.1.94"/>
    </reaction>
    <physiologicalReaction direction="right-to-left" evidence="1">
        <dbReference type="Rhea" id="RHEA:11094"/>
    </physiologicalReaction>
</comment>
<comment type="catalytic activity">
    <reaction evidence="1">
        <text>sn-glycerol 3-phosphate + NADP(+) = dihydroxyacetone phosphate + NADPH + H(+)</text>
        <dbReference type="Rhea" id="RHEA:11096"/>
        <dbReference type="ChEBI" id="CHEBI:15378"/>
        <dbReference type="ChEBI" id="CHEBI:57597"/>
        <dbReference type="ChEBI" id="CHEBI:57642"/>
        <dbReference type="ChEBI" id="CHEBI:57783"/>
        <dbReference type="ChEBI" id="CHEBI:58349"/>
        <dbReference type="EC" id="1.1.1.94"/>
    </reaction>
    <physiologicalReaction direction="right-to-left" evidence="1">
        <dbReference type="Rhea" id="RHEA:11098"/>
    </physiologicalReaction>
</comment>
<comment type="pathway">
    <text evidence="1">Membrane lipid metabolism; glycerophospholipid metabolism.</text>
</comment>
<comment type="subcellular location">
    <subcellularLocation>
        <location evidence="1">Cytoplasm</location>
    </subcellularLocation>
</comment>
<comment type="similarity">
    <text evidence="1">Belongs to the NAD-dependent glycerol-3-phosphate dehydrogenase family.</text>
</comment>
<dbReference type="EC" id="1.1.1.94" evidence="1"/>
<dbReference type="EMBL" id="CP001177">
    <property type="protein sequence ID" value="ACJ78050.1"/>
    <property type="molecule type" value="Genomic_DNA"/>
</dbReference>
<dbReference type="SMR" id="B7HL15"/>
<dbReference type="KEGG" id="bcr:BCAH187_A1668"/>
<dbReference type="HOGENOM" id="CLU_033449_0_2_9"/>
<dbReference type="UniPathway" id="UPA00940"/>
<dbReference type="Proteomes" id="UP000002214">
    <property type="component" value="Chromosome"/>
</dbReference>
<dbReference type="GO" id="GO:0005829">
    <property type="term" value="C:cytosol"/>
    <property type="evidence" value="ECO:0007669"/>
    <property type="project" value="TreeGrafter"/>
</dbReference>
<dbReference type="GO" id="GO:0047952">
    <property type="term" value="F:glycerol-3-phosphate dehydrogenase [NAD(P)+] activity"/>
    <property type="evidence" value="ECO:0007669"/>
    <property type="project" value="UniProtKB-UniRule"/>
</dbReference>
<dbReference type="GO" id="GO:0051287">
    <property type="term" value="F:NAD binding"/>
    <property type="evidence" value="ECO:0007669"/>
    <property type="project" value="InterPro"/>
</dbReference>
<dbReference type="GO" id="GO:0005975">
    <property type="term" value="P:carbohydrate metabolic process"/>
    <property type="evidence" value="ECO:0007669"/>
    <property type="project" value="InterPro"/>
</dbReference>
<dbReference type="GO" id="GO:0046167">
    <property type="term" value="P:glycerol-3-phosphate biosynthetic process"/>
    <property type="evidence" value="ECO:0007669"/>
    <property type="project" value="UniProtKB-UniRule"/>
</dbReference>
<dbReference type="GO" id="GO:0046168">
    <property type="term" value="P:glycerol-3-phosphate catabolic process"/>
    <property type="evidence" value="ECO:0007669"/>
    <property type="project" value="InterPro"/>
</dbReference>
<dbReference type="GO" id="GO:0006650">
    <property type="term" value="P:glycerophospholipid metabolic process"/>
    <property type="evidence" value="ECO:0007669"/>
    <property type="project" value="UniProtKB-UniRule"/>
</dbReference>
<dbReference type="GO" id="GO:0008654">
    <property type="term" value="P:phospholipid biosynthetic process"/>
    <property type="evidence" value="ECO:0007669"/>
    <property type="project" value="UniProtKB-KW"/>
</dbReference>
<dbReference type="FunFam" id="1.10.1040.10:FF:000001">
    <property type="entry name" value="Glycerol-3-phosphate dehydrogenase [NAD(P)+]"/>
    <property type="match status" value="1"/>
</dbReference>
<dbReference type="FunFam" id="3.40.50.720:FF:000019">
    <property type="entry name" value="Glycerol-3-phosphate dehydrogenase [NAD(P)+]"/>
    <property type="match status" value="1"/>
</dbReference>
<dbReference type="Gene3D" id="1.10.1040.10">
    <property type="entry name" value="N-(1-d-carboxylethyl)-l-norvaline Dehydrogenase, domain 2"/>
    <property type="match status" value="1"/>
</dbReference>
<dbReference type="Gene3D" id="3.40.50.720">
    <property type="entry name" value="NAD(P)-binding Rossmann-like Domain"/>
    <property type="match status" value="1"/>
</dbReference>
<dbReference type="HAMAP" id="MF_00394">
    <property type="entry name" value="NAD_Glyc3P_dehydrog"/>
    <property type="match status" value="1"/>
</dbReference>
<dbReference type="InterPro" id="IPR008927">
    <property type="entry name" value="6-PGluconate_DH-like_C_sf"/>
</dbReference>
<dbReference type="InterPro" id="IPR013328">
    <property type="entry name" value="6PGD_dom2"/>
</dbReference>
<dbReference type="InterPro" id="IPR006168">
    <property type="entry name" value="G3P_DH_NAD-dep"/>
</dbReference>
<dbReference type="InterPro" id="IPR006109">
    <property type="entry name" value="G3P_DH_NAD-dep_C"/>
</dbReference>
<dbReference type="InterPro" id="IPR011128">
    <property type="entry name" value="G3P_DH_NAD-dep_N"/>
</dbReference>
<dbReference type="InterPro" id="IPR036291">
    <property type="entry name" value="NAD(P)-bd_dom_sf"/>
</dbReference>
<dbReference type="NCBIfam" id="NF000940">
    <property type="entry name" value="PRK00094.1-2"/>
    <property type="match status" value="1"/>
</dbReference>
<dbReference type="NCBIfam" id="NF000941">
    <property type="entry name" value="PRK00094.1-3"/>
    <property type="match status" value="1"/>
</dbReference>
<dbReference type="NCBIfam" id="NF000942">
    <property type="entry name" value="PRK00094.1-4"/>
    <property type="match status" value="1"/>
</dbReference>
<dbReference type="PANTHER" id="PTHR11728">
    <property type="entry name" value="GLYCEROL-3-PHOSPHATE DEHYDROGENASE"/>
    <property type="match status" value="1"/>
</dbReference>
<dbReference type="PANTHER" id="PTHR11728:SF1">
    <property type="entry name" value="GLYCEROL-3-PHOSPHATE DEHYDROGENASE [NAD(+)] 2, CHLOROPLASTIC"/>
    <property type="match status" value="1"/>
</dbReference>
<dbReference type="Pfam" id="PF07479">
    <property type="entry name" value="NAD_Gly3P_dh_C"/>
    <property type="match status" value="1"/>
</dbReference>
<dbReference type="Pfam" id="PF01210">
    <property type="entry name" value="NAD_Gly3P_dh_N"/>
    <property type="match status" value="1"/>
</dbReference>
<dbReference type="PIRSF" id="PIRSF000114">
    <property type="entry name" value="Glycerol-3-P_dh"/>
    <property type="match status" value="1"/>
</dbReference>
<dbReference type="PRINTS" id="PR00077">
    <property type="entry name" value="GPDHDRGNASE"/>
</dbReference>
<dbReference type="SUPFAM" id="SSF48179">
    <property type="entry name" value="6-phosphogluconate dehydrogenase C-terminal domain-like"/>
    <property type="match status" value="1"/>
</dbReference>
<dbReference type="SUPFAM" id="SSF51735">
    <property type="entry name" value="NAD(P)-binding Rossmann-fold domains"/>
    <property type="match status" value="1"/>
</dbReference>
<dbReference type="PROSITE" id="PS00957">
    <property type="entry name" value="NAD_G3PDH"/>
    <property type="match status" value="1"/>
</dbReference>
<organism>
    <name type="scientific">Bacillus cereus (strain AH187)</name>
    <dbReference type="NCBI Taxonomy" id="405534"/>
    <lineage>
        <taxon>Bacteria</taxon>
        <taxon>Bacillati</taxon>
        <taxon>Bacillota</taxon>
        <taxon>Bacilli</taxon>
        <taxon>Bacillales</taxon>
        <taxon>Bacillaceae</taxon>
        <taxon>Bacillus</taxon>
        <taxon>Bacillus cereus group</taxon>
    </lineage>
</organism>
<accession>B7HL15</accession>
<evidence type="ECO:0000255" key="1">
    <source>
        <dbReference type="HAMAP-Rule" id="MF_00394"/>
    </source>
</evidence>
<gene>
    <name evidence="1" type="primary">gpsA</name>
    <name type="ordered locus">BCAH187_A1668</name>
</gene>
<sequence>MTKITVVGAGSWGTALAMVLADNGHDVRIWGNRSELMDEINTKHENSRYLPGITLPSTIVAYSSLEEALVDVNVVLLVVPTKAYREVLQDMKKYVAGPTTWIHASKGIEPGTSKRISEVIEEEIPEDLIKDVVVLSGPSHAEEVGLRQATTVTSAAKRMEAAEEVQDLFMNSYFRVYTNPDIVGVELGGALKNIIALAAGITDGLGLGDNAKAALMTRGLTEIARLGRKMGGNPLTFAGLTGMGDLIVTCTSVHSRNWRAGNLLGKGHSLEEVLESMGMVVEGVRTTKAAHELAEKMEVEMPITAALYDVLFNGNNVKDAVGSLMGRVRKHEVEAIPDLL</sequence>
<protein>
    <recommendedName>
        <fullName evidence="1">Glycerol-3-phosphate dehydrogenase [NAD(P)+]</fullName>
        <ecNumber evidence="1">1.1.1.94</ecNumber>
    </recommendedName>
    <alternativeName>
        <fullName evidence="1">NAD(P)(+)-dependent glycerol-3-phosphate dehydrogenase</fullName>
    </alternativeName>
    <alternativeName>
        <fullName evidence="1">NAD(P)H-dependent dihydroxyacetone-phosphate reductase</fullName>
    </alternativeName>
</protein>
<feature type="chain" id="PRO_1000123119" description="Glycerol-3-phosphate dehydrogenase [NAD(P)+]">
    <location>
        <begin position="1"/>
        <end position="340"/>
    </location>
</feature>
<feature type="active site" description="Proton acceptor" evidence="1">
    <location>
        <position position="192"/>
    </location>
</feature>
<feature type="binding site" evidence="1">
    <location>
        <position position="11"/>
    </location>
    <ligand>
        <name>NADPH</name>
        <dbReference type="ChEBI" id="CHEBI:57783"/>
    </ligand>
</feature>
<feature type="binding site" evidence="1">
    <location>
        <position position="12"/>
    </location>
    <ligand>
        <name>NADPH</name>
        <dbReference type="ChEBI" id="CHEBI:57783"/>
    </ligand>
</feature>
<feature type="binding site" evidence="1">
    <location>
        <position position="33"/>
    </location>
    <ligand>
        <name>NADPH</name>
        <dbReference type="ChEBI" id="CHEBI:57783"/>
    </ligand>
</feature>
<feature type="binding site" evidence="1">
    <location>
        <position position="106"/>
    </location>
    <ligand>
        <name>NADPH</name>
        <dbReference type="ChEBI" id="CHEBI:57783"/>
    </ligand>
</feature>
<feature type="binding site" evidence="1">
    <location>
        <position position="106"/>
    </location>
    <ligand>
        <name>sn-glycerol 3-phosphate</name>
        <dbReference type="ChEBI" id="CHEBI:57597"/>
    </ligand>
</feature>
<feature type="binding site" evidence="1">
    <location>
        <position position="137"/>
    </location>
    <ligand>
        <name>sn-glycerol 3-phosphate</name>
        <dbReference type="ChEBI" id="CHEBI:57597"/>
    </ligand>
</feature>
<feature type="binding site" evidence="1">
    <location>
        <position position="139"/>
    </location>
    <ligand>
        <name>sn-glycerol 3-phosphate</name>
        <dbReference type="ChEBI" id="CHEBI:57597"/>
    </ligand>
</feature>
<feature type="binding site" evidence="1">
    <location>
        <position position="141"/>
    </location>
    <ligand>
        <name>NADPH</name>
        <dbReference type="ChEBI" id="CHEBI:57783"/>
    </ligand>
</feature>
<feature type="binding site" evidence="1">
    <location>
        <position position="192"/>
    </location>
    <ligand>
        <name>sn-glycerol 3-phosphate</name>
        <dbReference type="ChEBI" id="CHEBI:57597"/>
    </ligand>
</feature>
<feature type="binding site" evidence="1">
    <location>
        <position position="245"/>
    </location>
    <ligand>
        <name>sn-glycerol 3-phosphate</name>
        <dbReference type="ChEBI" id="CHEBI:57597"/>
    </ligand>
</feature>
<feature type="binding site" evidence="1">
    <location>
        <position position="255"/>
    </location>
    <ligand>
        <name>sn-glycerol 3-phosphate</name>
        <dbReference type="ChEBI" id="CHEBI:57597"/>
    </ligand>
</feature>
<feature type="binding site" evidence="1">
    <location>
        <position position="256"/>
    </location>
    <ligand>
        <name>NADPH</name>
        <dbReference type="ChEBI" id="CHEBI:57783"/>
    </ligand>
</feature>
<feature type="binding site" evidence="1">
    <location>
        <position position="256"/>
    </location>
    <ligand>
        <name>sn-glycerol 3-phosphate</name>
        <dbReference type="ChEBI" id="CHEBI:57597"/>
    </ligand>
</feature>
<feature type="binding site" evidence="1">
    <location>
        <position position="257"/>
    </location>
    <ligand>
        <name>sn-glycerol 3-phosphate</name>
        <dbReference type="ChEBI" id="CHEBI:57597"/>
    </ligand>
</feature>
<feature type="binding site" evidence="1">
    <location>
        <position position="280"/>
    </location>
    <ligand>
        <name>NADPH</name>
        <dbReference type="ChEBI" id="CHEBI:57783"/>
    </ligand>
</feature>
<feature type="binding site" evidence="1">
    <location>
        <position position="282"/>
    </location>
    <ligand>
        <name>NADPH</name>
        <dbReference type="ChEBI" id="CHEBI:57783"/>
    </ligand>
</feature>
<name>GPDA_BACC7</name>
<keyword id="KW-0963">Cytoplasm</keyword>
<keyword id="KW-0444">Lipid biosynthesis</keyword>
<keyword id="KW-0443">Lipid metabolism</keyword>
<keyword id="KW-0520">NAD</keyword>
<keyword id="KW-0521">NADP</keyword>
<keyword id="KW-0547">Nucleotide-binding</keyword>
<keyword id="KW-0560">Oxidoreductase</keyword>
<keyword id="KW-0594">Phospholipid biosynthesis</keyword>
<keyword id="KW-1208">Phospholipid metabolism</keyword>